<dbReference type="EMBL" id="CP000939">
    <property type="protein sequence ID" value="ACA45918.1"/>
    <property type="molecule type" value="Genomic_DNA"/>
</dbReference>
<dbReference type="RefSeq" id="WP_003357637.1">
    <property type="nucleotide sequence ID" value="NC_010516.1"/>
</dbReference>
<dbReference type="SMR" id="B1IGD6"/>
<dbReference type="GeneID" id="92940232"/>
<dbReference type="KEGG" id="cbb:CLD_1042"/>
<dbReference type="HOGENOM" id="CLU_131047_2_1_9"/>
<dbReference type="Proteomes" id="UP000008541">
    <property type="component" value="Chromosome"/>
</dbReference>
<dbReference type="GO" id="GO:0022625">
    <property type="term" value="C:cytosolic large ribosomal subunit"/>
    <property type="evidence" value="ECO:0007669"/>
    <property type="project" value="TreeGrafter"/>
</dbReference>
<dbReference type="GO" id="GO:0003735">
    <property type="term" value="F:structural constituent of ribosome"/>
    <property type="evidence" value="ECO:0007669"/>
    <property type="project" value="InterPro"/>
</dbReference>
<dbReference type="GO" id="GO:0006412">
    <property type="term" value="P:translation"/>
    <property type="evidence" value="ECO:0007669"/>
    <property type="project" value="UniProtKB-UniRule"/>
</dbReference>
<dbReference type="CDD" id="cd01658">
    <property type="entry name" value="Ribosomal_L30"/>
    <property type="match status" value="1"/>
</dbReference>
<dbReference type="FunFam" id="3.30.1390.20:FF:000001">
    <property type="entry name" value="50S ribosomal protein L30"/>
    <property type="match status" value="1"/>
</dbReference>
<dbReference type="Gene3D" id="3.30.1390.20">
    <property type="entry name" value="Ribosomal protein L30, ferredoxin-like fold domain"/>
    <property type="match status" value="1"/>
</dbReference>
<dbReference type="HAMAP" id="MF_01371_B">
    <property type="entry name" value="Ribosomal_uL30_B"/>
    <property type="match status" value="1"/>
</dbReference>
<dbReference type="InterPro" id="IPR036919">
    <property type="entry name" value="Ribo_uL30_ferredoxin-like_sf"/>
</dbReference>
<dbReference type="InterPro" id="IPR005996">
    <property type="entry name" value="Ribosomal_uL30_bac-type"/>
</dbReference>
<dbReference type="InterPro" id="IPR016082">
    <property type="entry name" value="Ribosomal_uL30_ferredoxin-like"/>
</dbReference>
<dbReference type="NCBIfam" id="TIGR01308">
    <property type="entry name" value="rpmD_bact"/>
    <property type="match status" value="1"/>
</dbReference>
<dbReference type="PANTHER" id="PTHR15892:SF2">
    <property type="entry name" value="LARGE RIBOSOMAL SUBUNIT PROTEIN UL30M"/>
    <property type="match status" value="1"/>
</dbReference>
<dbReference type="PANTHER" id="PTHR15892">
    <property type="entry name" value="MITOCHONDRIAL RIBOSOMAL PROTEIN L30"/>
    <property type="match status" value="1"/>
</dbReference>
<dbReference type="Pfam" id="PF00327">
    <property type="entry name" value="Ribosomal_L30"/>
    <property type="match status" value="1"/>
</dbReference>
<dbReference type="PIRSF" id="PIRSF002211">
    <property type="entry name" value="Ribosomal_L30_bac-type"/>
    <property type="match status" value="1"/>
</dbReference>
<dbReference type="SUPFAM" id="SSF55129">
    <property type="entry name" value="Ribosomal protein L30p/L7e"/>
    <property type="match status" value="1"/>
</dbReference>
<protein>
    <recommendedName>
        <fullName evidence="1">Large ribosomal subunit protein uL30</fullName>
    </recommendedName>
    <alternativeName>
        <fullName evidence="2">50S ribosomal protein L30</fullName>
    </alternativeName>
</protein>
<reference key="1">
    <citation type="journal article" date="2007" name="PLoS ONE">
        <title>Analysis of the neurotoxin complex genes in Clostridium botulinum A1-A4 and B1 strains: BoNT/A3, /Ba4 and /B1 clusters are located within plasmids.</title>
        <authorList>
            <person name="Smith T.J."/>
            <person name="Hill K.K."/>
            <person name="Foley B.T."/>
            <person name="Detter J.C."/>
            <person name="Munk A.C."/>
            <person name="Bruce D.C."/>
            <person name="Doggett N.A."/>
            <person name="Smith L.A."/>
            <person name="Marks J.D."/>
            <person name="Xie G."/>
            <person name="Brettin T.S."/>
        </authorList>
    </citation>
    <scope>NUCLEOTIDE SEQUENCE [LARGE SCALE GENOMIC DNA]</scope>
    <source>
        <strain>Okra / Type B1</strain>
    </source>
</reference>
<comment type="subunit">
    <text evidence="1">Part of the 50S ribosomal subunit.</text>
</comment>
<comment type="similarity">
    <text evidence="1">Belongs to the universal ribosomal protein uL30 family.</text>
</comment>
<accession>B1IGD6</accession>
<proteinExistence type="inferred from homology"/>
<feature type="chain" id="PRO_1000144666" description="Large ribosomal subunit protein uL30">
    <location>
        <begin position="1"/>
        <end position="59"/>
    </location>
</feature>
<sequence>MAKVKITLVKSLIGRKKDQIATVNALGLKKIGNIVEHEETPQISGMIKKVSYLLKVEEA</sequence>
<gene>
    <name evidence="1" type="primary">rpmD</name>
    <name type="ordered locus">CLD_1042</name>
</gene>
<name>RL30_CLOBK</name>
<keyword id="KW-0687">Ribonucleoprotein</keyword>
<keyword id="KW-0689">Ribosomal protein</keyword>
<evidence type="ECO:0000255" key="1">
    <source>
        <dbReference type="HAMAP-Rule" id="MF_01371"/>
    </source>
</evidence>
<evidence type="ECO:0000305" key="2"/>
<organism>
    <name type="scientific">Clostridium botulinum (strain Okra / Type B1)</name>
    <dbReference type="NCBI Taxonomy" id="498213"/>
    <lineage>
        <taxon>Bacteria</taxon>
        <taxon>Bacillati</taxon>
        <taxon>Bacillota</taxon>
        <taxon>Clostridia</taxon>
        <taxon>Eubacteriales</taxon>
        <taxon>Clostridiaceae</taxon>
        <taxon>Clostridium</taxon>
    </lineage>
</organism>